<feature type="chain" id="PRO_0000053527" description="Ecdysone receptor">
    <location>
        <begin position="1"/>
        <end position="536"/>
    </location>
</feature>
<feature type="domain" description="NR LBD" evidence="3">
    <location>
        <begin position="278"/>
        <end position="514"/>
    </location>
</feature>
<feature type="DNA-binding region" description="Nuclear receptor" evidence="2">
    <location>
        <begin position="115"/>
        <end position="187"/>
    </location>
</feature>
<feature type="zinc finger region" description="NR C4-type" evidence="2">
    <location>
        <begin position="115"/>
        <end position="135"/>
    </location>
</feature>
<feature type="zinc finger region" description="NR C4-type" evidence="2">
    <location>
        <begin position="151"/>
        <end position="175"/>
    </location>
</feature>
<feature type="region of interest" description="Modulating" evidence="1">
    <location>
        <begin position="1"/>
        <end position="114"/>
    </location>
</feature>
<feature type="region of interest" description="Disordered" evidence="4">
    <location>
        <begin position="77"/>
        <end position="107"/>
    </location>
</feature>
<proteinExistence type="evidence at transcript level"/>
<dbReference type="EMBL" id="S60739">
    <property type="protein sequence ID" value="AAC60500.1"/>
    <property type="molecule type" value="mRNA"/>
</dbReference>
<dbReference type="PIR" id="A56590">
    <property type="entry name" value="A56590"/>
</dbReference>
<dbReference type="SMR" id="P49882"/>
<dbReference type="BindingDB" id="P49882"/>
<dbReference type="ChEMBL" id="CHEMBL2366579"/>
<dbReference type="GO" id="GO:0090575">
    <property type="term" value="C:RNA polymerase II transcription regulator complex"/>
    <property type="evidence" value="ECO:0007669"/>
    <property type="project" value="TreeGrafter"/>
</dbReference>
<dbReference type="GO" id="GO:0035100">
    <property type="term" value="F:ecdysone binding"/>
    <property type="evidence" value="ECO:0007669"/>
    <property type="project" value="InterPro"/>
</dbReference>
<dbReference type="GO" id="GO:0004879">
    <property type="term" value="F:nuclear receptor activity"/>
    <property type="evidence" value="ECO:0007669"/>
    <property type="project" value="InterPro"/>
</dbReference>
<dbReference type="GO" id="GO:0000978">
    <property type="term" value="F:RNA polymerase II cis-regulatory region sequence-specific DNA binding"/>
    <property type="evidence" value="ECO:0007669"/>
    <property type="project" value="TreeGrafter"/>
</dbReference>
<dbReference type="GO" id="GO:0008270">
    <property type="term" value="F:zinc ion binding"/>
    <property type="evidence" value="ECO:0007669"/>
    <property type="project" value="UniProtKB-KW"/>
</dbReference>
<dbReference type="GO" id="GO:0030154">
    <property type="term" value="P:cell differentiation"/>
    <property type="evidence" value="ECO:0007669"/>
    <property type="project" value="TreeGrafter"/>
</dbReference>
<dbReference type="GO" id="GO:0035076">
    <property type="term" value="P:ecdysone receptor signaling pathway"/>
    <property type="evidence" value="ECO:0007669"/>
    <property type="project" value="InterPro"/>
</dbReference>
<dbReference type="GO" id="GO:0000122">
    <property type="term" value="P:negative regulation of transcription by RNA polymerase II"/>
    <property type="evidence" value="ECO:0007669"/>
    <property type="project" value="TreeGrafter"/>
</dbReference>
<dbReference type="GO" id="GO:0045944">
    <property type="term" value="P:positive regulation of transcription by RNA polymerase II"/>
    <property type="evidence" value="ECO:0007669"/>
    <property type="project" value="TreeGrafter"/>
</dbReference>
<dbReference type="CDD" id="cd07161">
    <property type="entry name" value="NR_DBD_EcR"/>
    <property type="match status" value="1"/>
</dbReference>
<dbReference type="CDD" id="cd06938">
    <property type="entry name" value="NR_LBD_EcR"/>
    <property type="match status" value="1"/>
</dbReference>
<dbReference type="FunFam" id="1.10.565.10:FF:000030">
    <property type="entry name" value="Ecdysone receptor (Isoform A)"/>
    <property type="match status" value="1"/>
</dbReference>
<dbReference type="FunFam" id="3.30.50.10:FF:000031">
    <property type="entry name" value="Ecdysone receptor A1"/>
    <property type="match status" value="1"/>
</dbReference>
<dbReference type="Gene3D" id="3.30.50.10">
    <property type="entry name" value="Erythroid Transcription Factor GATA-1, subunit A"/>
    <property type="match status" value="1"/>
</dbReference>
<dbReference type="Gene3D" id="1.10.565.10">
    <property type="entry name" value="Retinoid X Receptor"/>
    <property type="match status" value="1"/>
</dbReference>
<dbReference type="InterPro" id="IPR003069">
    <property type="entry name" value="Ecdystd_rcpt"/>
</dbReference>
<dbReference type="InterPro" id="IPR035500">
    <property type="entry name" value="NHR-like_dom_sf"/>
</dbReference>
<dbReference type="InterPro" id="IPR041889">
    <property type="entry name" value="NR_LBD_EcR"/>
</dbReference>
<dbReference type="InterPro" id="IPR000536">
    <property type="entry name" value="Nucl_hrmn_rcpt_lig-bd"/>
</dbReference>
<dbReference type="InterPro" id="IPR050234">
    <property type="entry name" value="Nuclear_hormone_rcpt_NR1"/>
</dbReference>
<dbReference type="InterPro" id="IPR001723">
    <property type="entry name" value="Nuclear_hrmn_rcpt"/>
</dbReference>
<dbReference type="InterPro" id="IPR001628">
    <property type="entry name" value="Znf_hrmn_rcpt"/>
</dbReference>
<dbReference type="InterPro" id="IPR013088">
    <property type="entry name" value="Znf_NHR/GATA"/>
</dbReference>
<dbReference type="PANTHER" id="PTHR24082:SF507">
    <property type="entry name" value="BILE ACID RECEPTOR-RELATED"/>
    <property type="match status" value="1"/>
</dbReference>
<dbReference type="PANTHER" id="PTHR24082">
    <property type="entry name" value="NUCLEAR HORMONE RECEPTOR"/>
    <property type="match status" value="1"/>
</dbReference>
<dbReference type="Pfam" id="PF00104">
    <property type="entry name" value="Hormone_recep"/>
    <property type="match status" value="1"/>
</dbReference>
<dbReference type="Pfam" id="PF00105">
    <property type="entry name" value="zf-C4"/>
    <property type="match status" value="1"/>
</dbReference>
<dbReference type="PRINTS" id="PR01283">
    <property type="entry name" value="ECDYSTEROIDR"/>
</dbReference>
<dbReference type="PRINTS" id="PR00398">
    <property type="entry name" value="STRDHORMONER"/>
</dbReference>
<dbReference type="PRINTS" id="PR00047">
    <property type="entry name" value="STROIDFINGER"/>
</dbReference>
<dbReference type="SMART" id="SM00430">
    <property type="entry name" value="HOLI"/>
    <property type="match status" value="1"/>
</dbReference>
<dbReference type="SMART" id="SM00399">
    <property type="entry name" value="ZnF_C4"/>
    <property type="match status" value="1"/>
</dbReference>
<dbReference type="SUPFAM" id="SSF57716">
    <property type="entry name" value="Glucocorticoid receptor-like (DNA-binding domain)"/>
    <property type="match status" value="1"/>
</dbReference>
<dbReference type="SUPFAM" id="SSF48508">
    <property type="entry name" value="Nuclear receptor ligand-binding domain"/>
    <property type="match status" value="1"/>
</dbReference>
<dbReference type="PROSITE" id="PS51843">
    <property type="entry name" value="NR_LBD"/>
    <property type="match status" value="1"/>
</dbReference>
<dbReference type="PROSITE" id="PS00031">
    <property type="entry name" value="NUCLEAR_REC_DBD_1"/>
    <property type="match status" value="1"/>
</dbReference>
<dbReference type="PROSITE" id="PS51030">
    <property type="entry name" value="NUCLEAR_REC_DBD_2"/>
    <property type="match status" value="1"/>
</dbReference>
<gene>
    <name type="primary">EcR</name>
    <name type="synonym">NR1H1</name>
</gene>
<name>ECR_CHITE</name>
<sequence>MKTENLIVTTVKVEPLNYASQSFGDNNIYGGATKKQRLESDEWMNHNQTNMNLESSNMNHNTISGFSSPDVNYEAYSPNSKLDDGNMSVHMGDGLDGKKSSSKKGPVPRQQEELCLVCGDRASGYHYNALTCEGCKGFFRRSVTKNAVYCCKFGHECEMDMYMRRKCQECRLKKCLAVGMRPECVVPENQCAIKRKEKKAQKEKDKVPGIVGSNTSSSSLLNQSLNNGSLKNLEISYREELLEQLMKCDPPPHPMQQLLPEKLLMENRAKGTPQLTANQVAVIYKLIWYQDGYEQPSEEDLKRITTELEEEEDQEHEANFRYITEVTILTVQLIVEFAKGLPAFIKIPQEDQITLLKACSSEVMMLRMARRYDHDSDSILFANNTAYTKQTYQLAGMEETIDDLLHFCRQMYALSIDNVEYALLTAIVIFSDRPGLEKAEMVDIIQSYYTETLKVYIVNRHGGESRCSVQFAKLLGILTELRTMGNKNSEMCFSLKLRNRKLPRFLEEVWDVGDVNNQTTATTNTENIVRERINRN</sequence>
<accession>P49882</accession>
<comment type="function">
    <text>Receptor for ecdysone. Binds to ecdysone response elements (ECRES).</text>
</comment>
<comment type="subcellular location">
    <subcellularLocation>
        <location>Nucleus</location>
    </subcellularLocation>
</comment>
<comment type="similarity">
    <text evidence="5">Belongs to the nuclear hormone receptor family. NR1 subfamily.</text>
</comment>
<organism>
    <name type="scientific">Chironomus tentans</name>
    <name type="common">Midge</name>
    <name type="synonym">Camptochironomus tentans</name>
    <dbReference type="NCBI Taxonomy" id="7153"/>
    <lineage>
        <taxon>Eukaryota</taxon>
        <taxon>Metazoa</taxon>
        <taxon>Ecdysozoa</taxon>
        <taxon>Arthropoda</taxon>
        <taxon>Hexapoda</taxon>
        <taxon>Insecta</taxon>
        <taxon>Pterygota</taxon>
        <taxon>Neoptera</taxon>
        <taxon>Endopterygota</taxon>
        <taxon>Diptera</taxon>
        <taxon>Nematocera</taxon>
        <taxon>Chironomoidea</taxon>
        <taxon>Chironomidae</taxon>
        <taxon>Chironominae</taxon>
        <taxon>Chironomus</taxon>
    </lineage>
</organism>
<reference key="1">
    <citation type="journal article" date="1993" name="Insect Biochem. Mol. Biol.">
        <title>Cloning of a Chironomus tentans cDNA encoding a protein (cEcRH) homologous to the Drosophila melanogaster ecdysteroid receptor (dEcR).</title>
        <authorList>
            <person name="Imhof M.O."/>
            <person name="Rusconi S."/>
            <person name="Lezzi M."/>
        </authorList>
    </citation>
    <scope>NUCLEOTIDE SEQUENCE [MRNA]</scope>
</reference>
<protein>
    <recommendedName>
        <fullName>Ecdysone receptor</fullName>
    </recommendedName>
    <alternativeName>
        <fullName>20-hydroxy-ecdysone receptor</fullName>
        <shortName>20E receptor</shortName>
    </alternativeName>
    <alternativeName>
        <fullName>EcRH</fullName>
    </alternativeName>
    <alternativeName>
        <fullName>Ecdysteroid receptor</fullName>
    </alternativeName>
    <alternativeName>
        <fullName>Nuclear receptor subfamily 1 group H member 1</fullName>
    </alternativeName>
</protein>
<keyword id="KW-0238">DNA-binding</keyword>
<keyword id="KW-0479">Metal-binding</keyword>
<keyword id="KW-0539">Nucleus</keyword>
<keyword id="KW-0675">Receptor</keyword>
<keyword id="KW-0804">Transcription</keyword>
<keyword id="KW-0805">Transcription regulation</keyword>
<keyword id="KW-0862">Zinc</keyword>
<keyword id="KW-0863">Zinc-finger</keyword>
<evidence type="ECO:0000255" key="1"/>
<evidence type="ECO:0000255" key="2">
    <source>
        <dbReference type="PROSITE-ProRule" id="PRU00407"/>
    </source>
</evidence>
<evidence type="ECO:0000255" key="3">
    <source>
        <dbReference type="PROSITE-ProRule" id="PRU01189"/>
    </source>
</evidence>
<evidence type="ECO:0000256" key="4">
    <source>
        <dbReference type="SAM" id="MobiDB-lite"/>
    </source>
</evidence>
<evidence type="ECO:0000305" key="5"/>